<protein>
    <recommendedName>
        <fullName evidence="1">UPF0114 protein YqhA</fullName>
    </recommendedName>
</protein>
<keyword id="KW-1003">Cell membrane</keyword>
<keyword id="KW-0472">Membrane</keyword>
<keyword id="KW-1185">Reference proteome</keyword>
<keyword id="KW-0812">Transmembrane</keyword>
<keyword id="KW-1133">Transmembrane helix</keyword>
<accession>B7LGE9</accession>
<feature type="chain" id="PRO_1000197567" description="UPF0114 protein YqhA">
    <location>
        <begin position="1"/>
        <end position="164"/>
    </location>
</feature>
<feature type="transmembrane region" description="Helical" evidence="1">
    <location>
        <begin position="15"/>
        <end position="35"/>
    </location>
</feature>
<feature type="transmembrane region" description="Helical" evidence="1">
    <location>
        <begin position="53"/>
        <end position="73"/>
    </location>
</feature>
<feature type="transmembrane region" description="Helical" evidence="1">
    <location>
        <begin position="136"/>
        <end position="156"/>
    </location>
</feature>
<comment type="subcellular location">
    <subcellularLocation>
        <location evidence="1">Cell membrane</location>
        <topology evidence="1">Multi-pass membrane protein</topology>
    </subcellularLocation>
</comment>
<comment type="similarity">
    <text evidence="1">Belongs to the UPF0114 family.</text>
</comment>
<evidence type="ECO:0000255" key="1">
    <source>
        <dbReference type="HAMAP-Rule" id="MF_00143"/>
    </source>
</evidence>
<sequence length="164" mass="18641">MERFLENAMYASRWLLAPVYFGLSLALVALALKFFQEIIHVLPNIFSMAESDLILVLLSLVDMTLVGGLLVMVMFSGYENFVSQLDISENKEKLNWLGKMDATSLKNKVAASIVAISSIHLLRVFMDAKNVPDNKLMWYVIIHLTFVLSAFVMGYLDRLTRHNH</sequence>
<gene>
    <name evidence="1" type="primary">yqhA</name>
    <name type="ordered locus">EC55989_3420</name>
</gene>
<organism>
    <name type="scientific">Escherichia coli (strain 55989 / EAEC)</name>
    <dbReference type="NCBI Taxonomy" id="585055"/>
    <lineage>
        <taxon>Bacteria</taxon>
        <taxon>Pseudomonadati</taxon>
        <taxon>Pseudomonadota</taxon>
        <taxon>Gammaproteobacteria</taxon>
        <taxon>Enterobacterales</taxon>
        <taxon>Enterobacteriaceae</taxon>
        <taxon>Escherichia</taxon>
    </lineage>
</organism>
<reference key="1">
    <citation type="journal article" date="2009" name="PLoS Genet.">
        <title>Organised genome dynamics in the Escherichia coli species results in highly diverse adaptive paths.</title>
        <authorList>
            <person name="Touchon M."/>
            <person name="Hoede C."/>
            <person name="Tenaillon O."/>
            <person name="Barbe V."/>
            <person name="Baeriswyl S."/>
            <person name="Bidet P."/>
            <person name="Bingen E."/>
            <person name="Bonacorsi S."/>
            <person name="Bouchier C."/>
            <person name="Bouvet O."/>
            <person name="Calteau A."/>
            <person name="Chiapello H."/>
            <person name="Clermont O."/>
            <person name="Cruveiller S."/>
            <person name="Danchin A."/>
            <person name="Diard M."/>
            <person name="Dossat C."/>
            <person name="Karoui M.E."/>
            <person name="Frapy E."/>
            <person name="Garry L."/>
            <person name="Ghigo J.M."/>
            <person name="Gilles A.M."/>
            <person name="Johnson J."/>
            <person name="Le Bouguenec C."/>
            <person name="Lescat M."/>
            <person name="Mangenot S."/>
            <person name="Martinez-Jehanne V."/>
            <person name="Matic I."/>
            <person name="Nassif X."/>
            <person name="Oztas S."/>
            <person name="Petit M.A."/>
            <person name="Pichon C."/>
            <person name="Rouy Z."/>
            <person name="Ruf C.S."/>
            <person name="Schneider D."/>
            <person name="Tourret J."/>
            <person name="Vacherie B."/>
            <person name="Vallenet D."/>
            <person name="Medigue C."/>
            <person name="Rocha E.P.C."/>
            <person name="Denamur E."/>
        </authorList>
    </citation>
    <scope>NUCLEOTIDE SEQUENCE [LARGE SCALE GENOMIC DNA]</scope>
    <source>
        <strain>55989 / EAEC</strain>
    </source>
</reference>
<name>YQHA_ECO55</name>
<dbReference type="EMBL" id="CU928145">
    <property type="protein sequence ID" value="CAU99526.1"/>
    <property type="molecule type" value="Genomic_DNA"/>
</dbReference>
<dbReference type="RefSeq" id="WP_000439331.1">
    <property type="nucleotide sequence ID" value="NZ_CP028304.1"/>
</dbReference>
<dbReference type="KEGG" id="eck:EC55989_3420"/>
<dbReference type="HOGENOM" id="CLU_097887_1_1_6"/>
<dbReference type="Proteomes" id="UP000000746">
    <property type="component" value="Chromosome"/>
</dbReference>
<dbReference type="GO" id="GO:0005886">
    <property type="term" value="C:plasma membrane"/>
    <property type="evidence" value="ECO:0007669"/>
    <property type="project" value="UniProtKB-SubCell"/>
</dbReference>
<dbReference type="HAMAP" id="MF_00143">
    <property type="entry name" value="UPF0114"/>
    <property type="match status" value="1"/>
</dbReference>
<dbReference type="InterPro" id="IPR005134">
    <property type="entry name" value="UPF0114"/>
</dbReference>
<dbReference type="InterPro" id="IPR020761">
    <property type="entry name" value="UPF0114_bac"/>
</dbReference>
<dbReference type="NCBIfam" id="TIGR00645">
    <property type="entry name" value="HI0507"/>
    <property type="match status" value="1"/>
</dbReference>
<dbReference type="PANTHER" id="PTHR38596">
    <property type="entry name" value="UPF0114 PROTEIN YQHA"/>
    <property type="match status" value="1"/>
</dbReference>
<dbReference type="PANTHER" id="PTHR38596:SF1">
    <property type="entry name" value="UPF0114 PROTEIN YQHA"/>
    <property type="match status" value="1"/>
</dbReference>
<dbReference type="Pfam" id="PF03350">
    <property type="entry name" value="UPF0114"/>
    <property type="match status" value="1"/>
</dbReference>
<proteinExistence type="inferred from homology"/>